<evidence type="ECO:0000255" key="1"/>
<evidence type="ECO:0000269" key="2">
    <source>
    </source>
</evidence>
<evidence type="ECO:0000305" key="3"/>
<evidence type="ECO:0007829" key="4">
    <source>
        <dbReference type="PDB" id="1KNQ"/>
    </source>
</evidence>
<keyword id="KW-0002">3D-structure</keyword>
<keyword id="KW-0067">ATP-binding</keyword>
<keyword id="KW-0903">Direct protein sequencing</keyword>
<keyword id="KW-0418">Kinase</keyword>
<keyword id="KW-0547">Nucleotide-binding</keyword>
<keyword id="KW-1185">Reference proteome</keyword>
<keyword id="KW-0808">Transferase</keyword>
<comment type="catalytic activity">
    <reaction>
        <text>D-gluconate + ATP = 6-phospho-D-gluconate + ADP + H(+)</text>
        <dbReference type="Rhea" id="RHEA:19433"/>
        <dbReference type="ChEBI" id="CHEBI:15378"/>
        <dbReference type="ChEBI" id="CHEBI:18391"/>
        <dbReference type="ChEBI" id="CHEBI:30616"/>
        <dbReference type="ChEBI" id="CHEBI:58759"/>
        <dbReference type="ChEBI" id="CHEBI:456216"/>
        <dbReference type="EC" id="2.7.1.12"/>
    </reaction>
</comment>
<comment type="pathway">
    <text>Carbohydrate acid metabolism; D-gluconate degradation.</text>
</comment>
<comment type="similarity">
    <text evidence="3">Belongs to the gluconokinase GntK/GntV family.</text>
</comment>
<dbReference type="EC" id="2.7.1.12"/>
<dbReference type="EMBL" id="D84362">
    <property type="protein sequence ID" value="BAA12325.1"/>
    <property type="molecule type" value="Genomic_DNA"/>
</dbReference>
<dbReference type="EMBL" id="U18997">
    <property type="protein sequence ID" value="AAA58235.1"/>
    <property type="status" value="ALT_FRAME"/>
    <property type="molecule type" value="Genomic_DNA"/>
</dbReference>
<dbReference type="EMBL" id="U00096">
    <property type="protein sequence ID" value="AAC76462.2"/>
    <property type="molecule type" value="Genomic_DNA"/>
</dbReference>
<dbReference type="EMBL" id="AP009048">
    <property type="protein sequence ID" value="BAE77856.1"/>
    <property type="molecule type" value="Genomic_DNA"/>
</dbReference>
<dbReference type="RefSeq" id="NP_417894.2">
    <property type="nucleotide sequence ID" value="NC_000913.3"/>
</dbReference>
<dbReference type="RefSeq" id="WP_000108330.1">
    <property type="nucleotide sequence ID" value="NZ_STEB01000004.1"/>
</dbReference>
<dbReference type="PDB" id="1KNQ">
    <property type="method" value="X-ray"/>
    <property type="resolution" value="2.00 A"/>
    <property type="chains" value="A/B=1-175"/>
</dbReference>
<dbReference type="PDB" id="1KO1">
    <property type="method" value="X-ray"/>
    <property type="resolution" value="2.09 A"/>
    <property type="chains" value="A/B=1-175"/>
</dbReference>
<dbReference type="PDB" id="1KO4">
    <property type="method" value="X-ray"/>
    <property type="resolution" value="2.50 A"/>
    <property type="chains" value="A/B=1-175"/>
</dbReference>
<dbReference type="PDB" id="1KO5">
    <property type="method" value="X-ray"/>
    <property type="resolution" value="2.28 A"/>
    <property type="chains" value="A/B=1-175"/>
</dbReference>
<dbReference type="PDB" id="1KO8">
    <property type="method" value="X-ray"/>
    <property type="resolution" value="2.40 A"/>
    <property type="chains" value="A/B=1-175"/>
</dbReference>
<dbReference type="PDB" id="1KOF">
    <property type="method" value="X-ray"/>
    <property type="resolution" value="2.80 A"/>
    <property type="chains" value="A/B=1-175"/>
</dbReference>
<dbReference type="PDBsum" id="1KNQ"/>
<dbReference type="PDBsum" id="1KO1"/>
<dbReference type="PDBsum" id="1KO4"/>
<dbReference type="PDBsum" id="1KO5"/>
<dbReference type="PDBsum" id="1KO8"/>
<dbReference type="PDBsum" id="1KOF"/>
<dbReference type="SMR" id="P46859"/>
<dbReference type="BioGRID" id="4261501">
    <property type="interactions" value="2"/>
</dbReference>
<dbReference type="DIP" id="DIP-9820N"/>
<dbReference type="FunCoup" id="P46859">
    <property type="interactions" value="558"/>
</dbReference>
<dbReference type="IntAct" id="P46859">
    <property type="interactions" value="2"/>
</dbReference>
<dbReference type="STRING" id="511145.b3437"/>
<dbReference type="DrugBank" id="DB02076">
    <property type="generic name" value="6-phospho-D-gluconic acid"/>
</dbReference>
<dbReference type="DrugBank" id="DB03909">
    <property type="generic name" value="Adenosine-5'-[Beta, Gamma-Methylene]Triphosphate"/>
</dbReference>
<dbReference type="jPOST" id="P46859"/>
<dbReference type="PaxDb" id="511145-b3437"/>
<dbReference type="EnsemblBacteria" id="AAC76462">
    <property type="protein sequence ID" value="AAC76462"/>
    <property type="gene ID" value="b3437"/>
</dbReference>
<dbReference type="GeneID" id="93778550"/>
<dbReference type="GeneID" id="947937"/>
<dbReference type="KEGG" id="ecj:JW3400"/>
<dbReference type="KEGG" id="eco:b3437"/>
<dbReference type="KEGG" id="ecoc:C3026_18625"/>
<dbReference type="PATRIC" id="fig|511145.12.peg.3533"/>
<dbReference type="EchoBASE" id="EB2513"/>
<dbReference type="eggNOG" id="COG3265">
    <property type="taxonomic scope" value="Bacteria"/>
</dbReference>
<dbReference type="HOGENOM" id="CLU_077168_1_0_6"/>
<dbReference type="InParanoid" id="P46859"/>
<dbReference type="OMA" id="HFIYLRA"/>
<dbReference type="OrthoDB" id="9795716at2"/>
<dbReference type="PhylomeDB" id="P46859"/>
<dbReference type="BioCyc" id="EcoCyc:GLUCONOKINII-MONOMER"/>
<dbReference type="BioCyc" id="MetaCyc:GLUCONOKINII-MONOMER"/>
<dbReference type="UniPathway" id="UPA00792"/>
<dbReference type="EvolutionaryTrace" id="P46859"/>
<dbReference type="PRO" id="PR:P46859"/>
<dbReference type="Proteomes" id="UP000000625">
    <property type="component" value="Chromosome"/>
</dbReference>
<dbReference type="GO" id="GO:0005524">
    <property type="term" value="F:ATP binding"/>
    <property type="evidence" value="ECO:0007669"/>
    <property type="project" value="UniProtKB-KW"/>
</dbReference>
<dbReference type="GO" id="GO:0046316">
    <property type="term" value="F:gluconokinase activity"/>
    <property type="evidence" value="ECO:0000314"/>
    <property type="project" value="EcoCyc"/>
</dbReference>
<dbReference type="GO" id="GO:0042803">
    <property type="term" value="F:protein homodimerization activity"/>
    <property type="evidence" value="ECO:0000314"/>
    <property type="project" value="EcoCyc"/>
</dbReference>
<dbReference type="GO" id="GO:0005975">
    <property type="term" value="P:carbohydrate metabolic process"/>
    <property type="evidence" value="ECO:0007669"/>
    <property type="project" value="InterPro"/>
</dbReference>
<dbReference type="CDD" id="cd02021">
    <property type="entry name" value="GntK"/>
    <property type="match status" value="1"/>
</dbReference>
<dbReference type="FunFam" id="3.40.50.300:FF:000505">
    <property type="entry name" value="Gluconokinase"/>
    <property type="match status" value="1"/>
</dbReference>
<dbReference type="Gene3D" id="3.40.50.300">
    <property type="entry name" value="P-loop containing nucleotide triphosphate hydrolases"/>
    <property type="match status" value="1"/>
</dbReference>
<dbReference type="InterPro" id="IPR027417">
    <property type="entry name" value="P-loop_NTPase"/>
</dbReference>
<dbReference type="InterPro" id="IPR031322">
    <property type="entry name" value="Shikimate/glucono_kinase"/>
</dbReference>
<dbReference type="InterPro" id="IPR006001">
    <property type="entry name" value="Therm_gnt_kin"/>
</dbReference>
<dbReference type="NCBIfam" id="NF008583">
    <property type="entry name" value="PRK11545.1"/>
    <property type="match status" value="1"/>
</dbReference>
<dbReference type="NCBIfam" id="TIGR01313">
    <property type="entry name" value="therm_gnt_kin"/>
    <property type="match status" value="1"/>
</dbReference>
<dbReference type="PANTHER" id="PTHR43442">
    <property type="entry name" value="GLUCONOKINASE-RELATED"/>
    <property type="match status" value="1"/>
</dbReference>
<dbReference type="PANTHER" id="PTHR43442:SF1">
    <property type="entry name" value="THERMORESISTANT GLUCONOKINASE"/>
    <property type="match status" value="1"/>
</dbReference>
<dbReference type="Pfam" id="PF01202">
    <property type="entry name" value="SKI"/>
    <property type="match status" value="1"/>
</dbReference>
<dbReference type="SUPFAM" id="SSF52540">
    <property type="entry name" value="P-loop containing nucleoside triphosphate hydrolases"/>
    <property type="match status" value="1"/>
</dbReference>
<protein>
    <recommendedName>
        <fullName>Thermoresistant gluconokinase</fullName>
        <ecNumber>2.7.1.12</ecNumber>
    </recommendedName>
    <alternativeName>
        <fullName>Gluconate kinase 2</fullName>
    </alternativeName>
</protein>
<name>GNTK_ECOLI</name>
<accession>P46859</accession>
<accession>P78116</accession>
<accession>Q2M7A0</accession>
<accession>Q59404</accession>
<sequence length="175" mass="19543">MSTTNHDHHIYVLMGVSGSGKSAVASEVAHQLHAAFLDGDFLHPRRNIEKMASGEPLNDDDRKPWLQALNDAAFAMQRTNKVSLIVCSALKKHYRDLLREGNPNLSFIYLKGDFDVIESRLKARKGHFFKTQMLVTQFETLQEPGADETDVLVVDIDQPLEGVVASTIEVIKKGK</sequence>
<gene>
    <name type="primary">gntK</name>
    <name type="ordered locus">b3437</name>
    <name type="ordered locus">JW3400</name>
</gene>
<reference key="1">
    <citation type="journal article" date="1997" name="J. Mol. Biol.">
        <title>Gene organization and transcriptional regulation of the gntRKU operon involved in gluconate uptake and catabolism of Escherichia coli.</title>
        <authorList>
            <person name="Izu H."/>
            <person name="Adachi O."/>
            <person name="Yamada M."/>
        </authorList>
    </citation>
    <scope>NUCLEOTIDE SEQUENCE [GENOMIC DNA]</scope>
    <source>
        <strain>K12 / W3110 / ATCC 27325 / DSM 5911</strain>
    </source>
</reference>
<reference key="2">
    <citation type="journal article" date="1997" name="Science">
        <title>The complete genome sequence of Escherichia coli K-12.</title>
        <authorList>
            <person name="Blattner F.R."/>
            <person name="Plunkett G. III"/>
            <person name="Bloch C.A."/>
            <person name="Perna N.T."/>
            <person name="Burland V."/>
            <person name="Riley M."/>
            <person name="Collado-Vides J."/>
            <person name="Glasner J.D."/>
            <person name="Rode C.K."/>
            <person name="Mayhew G.F."/>
            <person name="Gregor J."/>
            <person name="Davis N.W."/>
            <person name="Kirkpatrick H.A."/>
            <person name="Goeden M.A."/>
            <person name="Rose D.J."/>
            <person name="Mau B."/>
            <person name="Shao Y."/>
        </authorList>
    </citation>
    <scope>NUCLEOTIDE SEQUENCE [LARGE SCALE GENOMIC DNA]</scope>
    <source>
        <strain>K12 / MG1655 / ATCC 47076</strain>
    </source>
</reference>
<reference key="3">
    <citation type="journal article" date="2006" name="Mol. Syst. Biol.">
        <title>Highly accurate genome sequences of Escherichia coli K-12 strains MG1655 and W3110.</title>
        <authorList>
            <person name="Hayashi K."/>
            <person name="Morooka N."/>
            <person name="Yamamoto Y."/>
            <person name="Fujita K."/>
            <person name="Isono K."/>
            <person name="Choi S."/>
            <person name="Ohtsubo E."/>
            <person name="Baba T."/>
            <person name="Wanner B.L."/>
            <person name="Mori H."/>
            <person name="Horiuchi T."/>
        </authorList>
    </citation>
    <scope>NUCLEOTIDE SEQUENCE [LARGE SCALE GENOMIC DNA]</scope>
    <source>
        <strain>K12 / W3110 / ATCC 27325 / DSM 5911</strain>
    </source>
</reference>
<reference key="4">
    <citation type="journal article" date="1996" name="J. Bacteriol.">
        <title>Cloning and molecular genetic characterization of the Escherichia coli gntR, gntK, and gntU genes of GntI, the main system for gluconate metabolism.</title>
        <authorList>
            <person name="Tong S."/>
            <person name="Porco A."/>
            <person name="Isturiz T."/>
            <person name="Conway T."/>
        </authorList>
    </citation>
    <scope>PROTEIN SEQUENCE OF 2-20</scope>
    <scope>CHARACTERIZATION</scope>
</reference>
<reference key="5">
    <citation type="journal article" date="2001" name="Acta Crystallogr. D">
        <title>Crystallization and preliminary X-ray crystallographic studies of recombinant thermoresistant gluconate kinase GntK from Escherichia coli.</title>
        <authorList>
            <person name="Kraft L."/>
            <person name="Sprenger G.A."/>
            <person name="Lindqvist Y."/>
        </authorList>
    </citation>
    <scope>CRYSTALLIZATION</scope>
</reference>
<organism>
    <name type="scientific">Escherichia coli (strain K12)</name>
    <dbReference type="NCBI Taxonomy" id="83333"/>
    <lineage>
        <taxon>Bacteria</taxon>
        <taxon>Pseudomonadati</taxon>
        <taxon>Pseudomonadota</taxon>
        <taxon>Gammaproteobacteria</taxon>
        <taxon>Enterobacterales</taxon>
        <taxon>Enterobacteriaceae</taxon>
        <taxon>Escherichia</taxon>
    </lineage>
</organism>
<proteinExistence type="evidence at protein level"/>
<feature type="initiator methionine" description="Removed" evidence="2">
    <location>
        <position position="1"/>
    </location>
</feature>
<feature type="chain" id="PRO_0000087537" description="Thermoresistant gluconokinase">
    <location>
        <begin position="2"/>
        <end position="175"/>
    </location>
</feature>
<feature type="binding site" evidence="1">
    <location>
        <begin position="15"/>
        <end position="22"/>
    </location>
    <ligand>
        <name>ATP</name>
        <dbReference type="ChEBI" id="CHEBI:30616"/>
    </ligand>
</feature>
<feature type="strand" evidence="4">
    <location>
        <begin position="8"/>
        <end position="14"/>
    </location>
</feature>
<feature type="helix" evidence="4">
    <location>
        <begin position="21"/>
        <end position="32"/>
    </location>
</feature>
<feature type="strand" evidence="4">
    <location>
        <begin position="35"/>
        <end position="38"/>
    </location>
</feature>
<feature type="helix" evidence="4">
    <location>
        <begin position="39"/>
        <end position="42"/>
    </location>
</feature>
<feature type="helix" evidence="4">
    <location>
        <begin position="45"/>
        <end position="52"/>
    </location>
</feature>
<feature type="helix" evidence="4">
    <location>
        <begin position="59"/>
        <end position="79"/>
    </location>
</feature>
<feature type="strand" evidence="4">
    <location>
        <begin position="81"/>
        <end position="86"/>
    </location>
</feature>
<feature type="helix" evidence="4">
    <location>
        <begin position="92"/>
        <end position="99"/>
    </location>
</feature>
<feature type="strand" evidence="4">
    <location>
        <begin position="105"/>
        <end position="111"/>
    </location>
</feature>
<feature type="helix" evidence="4">
    <location>
        <begin position="114"/>
        <end position="122"/>
    </location>
</feature>
<feature type="helix" evidence="4">
    <location>
        <begin position="131"/>
        <end position="140"/>
    </location>
</feature>
<feature type="strand" evidence="4">
    <location>
        <begin position="151"/>
        <end position="155"/>
    </location>
</feature>
<feature type="helix" evidence="4">
    <location>
        <begin position="160"/>
        <end position="172"/>
    </location>
</feature>